<proteinExistence type="inferred from homology"/>
<feature type="chain" id="PRO_0000146821" description="Pyruvate carboxylase">
    <location>
        <begin position="1"/>
        <end position="1175"/>
    </location>
</feature>
<feature type="domain" description="Biotin carboxylation">
    <location>
        <begin position="22"/>
        <end position="474"/>
    </location>
</feature>
<feature type="domain" description="ATP-grasp" evidence="2">
    <location>
        <begin position="144"/>
        <end position="341"/>
    </location>
</feature>
<feature type="domain" description="Pyruvate carboxyltransferase" evidence="4">
    <location>
        <begin position="561"/>
        <end position="828"/>
    </location>
</feature>
<feature type="domain" description="Biotinyl-binding" evidence="3">
    <location>
        <begin position="1099"/>
        <end position="1174"/>
    </location>
</feature>
<feature type="active site" evidence="1">
    <location>
        <position position="316"/>
    </location>
</feature>
<feature type="binding site" evidence="1">
    <location>
        <position position="140"/>
    </location>
    <ligand>
        <name>ATP</name>
        <dbReference type="ChEBI" id="CHEBI:30616"/>
    </ligand>
</feature>
<feature type="binding site" evidence="1">
    <location>
        <position position="224"/>
    </location>
    <ligand>
        <name>ATP</name>
        <dbReference type="ChEBI" id="CHEBI:30616"/>
    </ligand>
</feature>
<feature type="binding site" evidence="1">
    <location>
        <position position="259"/>
    </location>
    <ligand>
        <name>ATP</name>
        <dbReference type="ChEBI" id="CHEBI:30616"/>
    </ligand>
</feature>
<feature type="binding site" evidence="1">
    <location>
        <begin position="569"/>
        <end position="573"/>
    </location>
    <ligand>
        <name>substrate</name>
    </ligand>
</feature>
<feature type="binding site" evidence="1">
    <location>
        <position position="570"/>
    </location>
    <ligand>
        <name>a divalent metal cation</name>
        <dbReference type="ChEBI" id="CHEBI:60240"/>
    </ligand>
</feature>
<feature type="binding site" evidence="1">
    <location>
        <position position="642"/>
    </location>
    <ligand>
        <name>substrate</name>
    </ligand>
</feature>
<feature type="binding site" description="via carbamate group" evidence="1">
    <location>
        <position position="738"/>
    </location>
    <ligand>
        <name>a divalent metal cation</name>
        <dbReference type="ChEBI" id="CHEBI:60240"/>
    </ligand>
</feature>
<feature type="binding site" evidence="1">
    <location>
        <position position="768"/>
    </location>
    <ligand>
        <name>a divalent metal cation</name>
        <dbReference type="ChEBI" id="CHEBI:60240"/>
    </ligand>
</feature>
<feature type="binding site" evidence="1">
    <location>
        <position position="770"/>
    </location>
    <ligand>
        <name>a divalent metal cation</name>
        <dbReference type="ChEBI" id="CHEBI:60240"/>
    </ligand>
</feature>
<feature type="binding site" evidence="1">
    <location>
        <position position="902"/>
    </location>
    <ligand>
        <name>substrate</name>
    </ligand>
</feature>
<feature type="modified residue" description="N6-carboxylysine" evidence="1">
    <location>
        <position position="738"/>
    </location>
</feature>
<feature type="modified residue" description="N6-biotinyllysine" evidence="1 3">
    <location>
        <position position="1140"/>
    </location>
</feature>
<reference key="1">
    <citation type="journal article" date="2003" name="Mol. Biol. Cell">
        <title>Pyruvate carboxylase is an essential protein in the assembly of yeast peroxisomal oligomeric alcohol oxidase.</title>
        <authorList>
            <person name="Ozimek P."/>
            <person name="Van Dijk R."/>
            <person name="Latchev K."/>
            <person name="Gancedo C."/>
            <person name="Wang D.Y."/>
            <person name="Van Der Klei I.J."/>
            <person name="Veenhuis M."/>
        </authorList>
    </citation>
    <scope>NUCLEOTIDE SEQUENCE [GENOMIC DNA]</scope>
    <source>
        <strain>ATCC 34438 / CBS 4732 / DSM 70277 / JCM 3621 / NBRC 1476 / NRRL Y-5445</strain>
    </source>
</reference>
<evidence type="ECO:0000250" key="1"/>
<evidence type="ECO:0000255" key="2">
    <source>
        <dbReference type="PROSITE-ProRule" id="PRU00409"/>
    </source>
</evidence>
<evidence type="ECO:0000255" key="3">
    <source>
        <dbReference type="PROSITE-ProRule" id="PRU01066"/>
    </source>
</evidence>
<evidence type="ECO:0000255" key="4">
    <source>
        <dbReference type="PROSITE-ProRule" id="PRU01151"/>
    </source>
</evidence>
<protein>
    <recommendedName>
        <fullName>Pyruvate carboxylase</fullName>
        <ecNumber>6.4.1.1</ecNumber>
    </recommendedName>
    <alternativeName>
        <fullName>Pyruvic carboxylase</fullName>
        <shortName>PCB</shortName>
    </alternativeName>
</protein>
<comment type="function">
    <text evidence="1">Pyruvate carboxylase catalyzes a 2-step reaction, involving the ATP-dependent carboxylation of the covalently attached biotin in the first step and the transfer of the carboxyl group to pyruvate in the second.</text>
</comment>
<comment type="catalytic activity">
    <reaction>
        <text>hydrogencarbonate + pyruvate + ATP = oxaloacetate + ADP + phosphate + H(+)</text>
        <dbReference type="Rhea" id="RHEA:20844"/>
        <dbReference type="ChEBI" id="CHEBI:15361"/>
        <dbReference type="ChEBI" id="CHEBI:15378"/>
        <dbReference type="ChEBI" id="CHEBI:16452"/>
        <dbReference type="ChEBI" id="CHEBI:17544"/>
        <dbReference type="ChEBI" id="CHEBI:30616"/>
        <dbReference type="ChEBI" id="CHEBI:43474"/>
        <dbReference type="ChEBI" id="CHEBI:456216"/>
        <dbReference type="EC" id="6.4.1.1"/>
    </reaction>
</comment>
<comment type="cofactor">
    <cofactor evidence="1">
        <name>biotin</name>
        <dbReference type="ChEBI" id="CHEBI:57586"/>
    </cofactor>
</comment>
<comment type="cofactor">
    <cofactor evidence="1">
        <name>Zn(2+)</name>
        <dbReference type="ChEBI" id="CHEBI:29105"/>
    </cofactor>
</comment>
<comment type="pathway">
    <text>Carbohydrate biosynthesis; gluconeogenesis.</text>
</comment>
<comment type="subcellular location">
    <subcellularLocation>
        <location evidence="1">Cytoplasm</location>
    </subcellularLocation>
</comment>
<accession>Q8X1T3</accession>
<organism>
    <name type="scientific">Pichia angusta</name>
    <name type="common">Yeast</name>
    <name type="synonym">Hansenula polymorpha</name>
    <dbReference type="NCBI Taxonomy" id="870730"/>
    <lineage>
        <taxon>Eukaryota</taxon>
        <taxon>Fungi</taxon>
        <taxon>Dikarya</taxon>
        <taxon>Ascomycota</taxon>
        <taxon>Saccharomycotina</taxon>
        <taxon>Pichiomycetes</taxon>
        <taxon>Pichiales</taxon>
        <taxon>Pichiaceae</taxon>
        <taxon>Ogataea</taxon>
    </lineage>
</organism>
<sequence>MAQVEDYSSLHRLRKNSEILSNANKILVANRGEIPIRIFRSAHELSMQTVAIYSHEDRLSMHRLKADEAYVIGARGQYSPVQAYLQIDEIINIALEHNVSMIHPGYGFLSENSEFARKVEDSGMIWIGPPHNVIDAVGDKVSARNLAGKCNVPVVPGTDGPIDSVEQAQEFVDKYGYPVIIKAAFGGGGRGMRVVREGESIADAFQRATSEAKTAFGNGTCFIERFLDKPKHIEVQLLADNYGNVIHLFERDCSVQRRHQKVVEIAPAKTLPVEVRDAILTDAVKLAKAANYRNAGTAEFLVDNQNRHYFIEINPRIQVEHTITEEVTGVDIVAAQIQIAAGASLQQLGLLQDKITTRGFAIQCRITTEDPAKNFQPDTGKIEVYRSSGGNGVRLDGGNGFAGAIISPHYDSMLVKCSTSGSNYEIARRKMIRALVEFRIRGVKTNIPFLLALLTHPTFVSGDCWTTFIDDTPSLFEMVQSKNRAQKLLSYLADLCVNGSSIKGQIGLPKLTRDADIPVIHDINGWDIDIKNTPPPESFRQYLLDYGPEQFANQIRAFDGCLIMDTTWRDAHQSLLATRVRTIDLLNIAPATAHAFRYAFALECWGGATFDVAMRFLHEDPWDRLRKLRKAVPNIPFQMLLRGANGVAYSSLPDNAIDHFVKQAKDAGVDIFRVFDALNDLEQLKVGVDAVKKAGGVVEATVCYSGDMLKPGKKYNLKYYLETVDKIMEMGTHLLGIKDMAGTLKPAAAKLLISSIRKKYPSVPIHVHTHDSAGTGVITYVACALAGADVVDCAVNSMSGLTSQPSMSAFIAALDNEINTGITEQNAREIDAYWSEMRLLYSCFEADLKGPDPEVYNHEIPGGQLTNLLFQAQQVGLGEKWLETKKAYEEANMLLGDIVKVTPTSKVVGDLAQFMVSNKLSPKDVERLASELDFPDSVLDFFEGLMGTPYGGFPEPLRTNILAGKRRKLTRRPGLELEPFDLKKIKEELQSRFGNSITECDVASYNMYPKVFESFKKIQEKYGDLSVLPTRFFLAPPKLNEEISVEIEQGKTFVIKVMAIGDLSPQTGTREVYFEFNGEMRKVTVEDKLAAVETVTRPKADAHNPNEVGAPMAGVVIEVRVHPGVEVKKGDPLCVLSAMKMEMVISSPVSGRVGEVIVHENDSVDAGDLICKITK</sequence>
<gene>
    <name type="primary">PYC</name>
</gene>
<dbReference type="EC" id="6.4.1.1"/>
<dbReference type="EMBL" id="AF221670">
    <property type="protein sequence ID" value="AAL69566.1"/>
    <property type="molecule type" value="Genomic_DNA"/>
</dbReference>
<dbReference type="SMR" id="Q8X1T3"/>
<dbReference type="MoonProt" id="Q8X1T3"/>
<dbReference type="PhylomeDB" id="Q8X1T3"/>
<dbReference type="UniPathway" id="UPA00138"/>
<dbReference type="GO" id="GO:0005737">
    <property type="term" value="C:cytoplasm"/>
    <property type="evidence" value="ECO:0007669"/>
    <property type="project" value="UniProtKB-SubCell"/>
</dbReference>
<dbReference type="GO" id="GO:0005524">
    <property type="term" value="F:ATP binding"/>
    <property type="evidence" value="ECO:0007669"/>
    <property type="project" value="UniProtKB-KW"/>
</dbReference>
<dbReference type="GO" id="GO:0046872">
    <property type="term" value="F:metal ion binding"/>
    <property type="evidence" value="ECO:0007669"/>
    <property type="project" value="UniProtKB-KW"/>
</dbReference>
<dbReference type="GO" id="GO:0004736">
    <property type="term" value="F:pyruvate carboxylase activity"/>
    <property type="evidence" value="ECO:0007669"/>
    <property type="project" value="UniProtKB-EC"/>
</dbReference>
<dbReference type="GO" id="GO:0006094">
    <property type="term" value="P:gluconeogenesis"/>
    <property type="evidence" value="ECO:0007669"/>
    <property type="project" value="UniProtKB-UniPathway"/>
</dbReference>
<dbReference type="CDD" id="cd06850">
    <property type="entry name" value="biotinyl_domain"/>
    <property type="match status" value="1"/>
</dbReference>
<dbReference type="CDD" id="cd07937">
    <property type="entry name" value="DRE_TIM_PC_TC_5S"/>
    <property type="match status" value="1"/>
</dbReference>
<dbReference type="FunFam" id="2.40.50.100:FF:000003">
    <property type="entry name" value="Acetyl-CoA carboxylase biotin carboxyl carrier protein"/>
    <property type="match status" value="1"/>
</dbReference>
<dbReference type="FunFam" id="3.30.1490.20:FF:000018">
    <property type="entry name" value="Biotin carboxylase"/>
    <property type="match status" value="1"/>
</dbReference>
<dbReference type="FunFam" id="3.40.50.20:FF:000010">
    <property type="entry name" value="Propionyl-CoA carboxylase subunit alpha"/>
    <property type="match status" value="1"/>
</dbReference>
<dbReference type="FunFam" id="3.10.600.10:FF:000007">
    <property type="entry name" value="Pyruvate carboxylase"/>
    <property type="match status" value="1"/>
</dbReference>
<dbReference type="FunFam" id="3.20.20.70:FF:000033">
    <property type="entry name" value="Pyruvate carboxylase"/>
    <property type="match status" value="1"/>
</dbReference>
<dbReference type="FunFam" id="3.30.470.20:FF:000012">
    <property type="entry name" value="Pyruvate carboxylase"/>
    <property type="match status" value="1"/>
</dbReference>
<dbReference type="Gene3D" id="2.40.50.100">
    <property type="match status" value="1"/>
</dbReference>
<dbReference type="Gene3D" id="3.20.20.70">
    <property type="entry name" value="Aldolase class I"/>
    <property type="match status" value="1"/>
</dbReference>
<dbReference type="Gene3D" id="3.30.470.20">
    <property type="entry name" value="ATP-grasp fold, B domain"/>
    <property type="match status" value="1"/>
</dbReference>
<dbReference type="InterPro" id="IPR013785">
    <property type="entry name" value="Aldolase_TIM"/>
</dbReference>
<dbReference type="InterPro" id="IPR011761">
    <property type="entry name" value="ATP-grasp"/>
</dbReference>
<dbReference type="InterPro" id="IPR005481">
    <property type="entry name" value="BC-like_N"/>
</dbReference>
<dbReference type="InterPro" id="IPR001882">
    <property type="entry name" value="Biotin_BS"/>
</dbReference>
<dbReference type="InterPro" id="IPR011764">
    <property type="entry name" value="Biotin_carboxylation_dom"/>
</dbReference>
<dbReference type="InterPro" id="IPR005482">
    <property type="entry name" value="Biotin_COase_C"/>
</dbReference>
<dbReference type="InterPro" id="IPR000089">
    <property type="entry name" value="Biotin_lipoyl"/>
</dbReference>
<dbReference type="InterPro" id="IPR003379">
    <property type="entry name" value="Carboxylase_cons_dom"/>
</dbReference>
<dbReference type="InterPro" id="IPR005479">
    <property type="entry name" value="CbamoylP_synth_lsu-like_ATP-bd"/>
</dbReference>
<dbReference type="InterPro" id="IPR055268">
    <property type="entry name" value="PCB-like"/>
</dbReference>
<dbReference type="InterPro" id="IPR016185">
    <property type="entry name" value="PreATP-grasp_dom_sf"/>
</dbReference>
<dbReference type="InterPro" id="IPR000891">
    <property type="entry name" value="PYR_CT"/>
</dbReference>
<dbReference type="InterPro" id="IPR005930">
    <property type="entry name" value="Pyruv_COase"/>
</dbReference>
<dbReference type="InterPro" id="IPR011054">
    <property type="entry name" value="Rudment_hybrid_motif"/>
</dbReference>
<dbReference type="InterPro" id="IPR011053">
    <property type="entry name" value="Single_hybrid_motif"/>
</dbReference>
<dbReference type="NCBIfam" id="NF006761">
    <property type="entry name" value="PRK09282.1"/>
    <property type="match status" value="1"/>
</dbReference>
<dbReference type="NCBIfam" id="NF009554">
    <property type="entry name" value="PRK12999.1"/>
    <property type="match status" value="1"/>
</dbReference>
<dbReference type="NCBIfam" id="TIGR01235">
    <property type="entry name" value="pyruv_carbox"/>
    <property type="match status" value="1"/>
</dbReference>
<dbReference type="PANTHER" id="PTHR43778">
    <property type="entry name" value="PYRUVATE CARBOXYLASE"/>
    <property type="match status" value="1"/>
</dbReference>
<dbReference type="PANTHER" id="PTHR43778:SF2">
    <property type="entry name" value="PYRUVATE CARBOXYLASE, MITOCHONDRIAL"/>
    <property type="match status" value="1"/>
</dbReference>
<dbReference type="Pfam" id="PF02785">
    <property type="entry name" value="Biotin_carb_C"/>
    <property type="match status" value="1"/>
</dbReference>
<dbReference type="Pfam" id="PF00289">
    <property type="entry name" value="Biotin_carb_N"/>
    <property type="match status" value="1"/>
</dbReference>
<dbReference type="Pfam" id="PF00364">
    <property type="entry name" value="Biotin_lipoyl"/>
    <property type="match status" value="1"/>
</dbReference>
<dbReference type="Pfam" id="PF02786">
    <property type="entry name" value="CPSase_L_D2"/>
    <property type="match status" value="1"/>
</dbReference>
<dbReference type="Pfam" id="PF00682">
    <property type="entry name" value="HMGL-like"/>
    <property type="match status" value="1"/>
</dbReference>
<dbReference type="Pfam" id="PF02436">
    <property type="entry name" value="PYC_OADA"/>
    <property type="match status" value="1"/>
</dbReference>
<dbReference type="PIRSF" id="PIRSF001594">
    <property type="entry name" value="Pyruv_carbox"/>
    <property type="match status" value="1"/>
</dbReference>
<dbReference type="SMART" id="SM00878">
    <property type="entry name" value="Biotin_carb_C"/>
    <property type="match status" value="1"/>
</dbReference>
<dbReference type="SUPFAM" id="SSF51569">
    <property type="entry name" value="Aldolase"/>
    <property type="match status" value="1"/>
</dbReference>
<dbReference type="SUPFAM" id="SSF56059">
    <property type="entry name" value="Glutathione synthetase ATP-binding domain-like"/>
    <property type="match status" value="1"/>
</dbReference>
<dbReference type="SUPFAM" id="SSF89000">
    <property type="entry name" value="post-HMGL domain-like"/>
    <property type="match status" value="1"/>
</dbReference>
<dbReference type="SUPFAM" id="SSF52440">
    <property type="entry name" value="PreATP-grasp domain"/>
    <property type="match status" value="1"/>
</dbReference>
<dbReference type="SUPFAM" id="SSF51246">
    <property type="entry name" value="Rudiment single hybrid motif"/>
    <property type="match status" value="1"/>
</dbReference>
<dbReference type="SUPFAM" id="SSF51230">
    <property type="entry name" value="Single hybrid motif"/>
    <property type="match status" value="1"/>
</dbReference>
<dbReference type="PROSITE" id="PS50975">
    <property type="entry name" value="ATP_GRASP"/>
    <property type="match status" value="1"/>
</dbReference>
<dbReference type="PROSITE" id="PS50979">
    <property type="entry name" value="BC"/>
    <property type="match status" value="1"/>
</dbReference>
<dbReference type="PROSITE" id="PS00188">
    <property type="entry name" value="BIOTIN"/>
    <property type="match status" value="1"/>
</dbReference>
<dbReference type="PROSITE" id="PS50968">
    <property type="entry name" value="BIOTINYL_LIPOYL"/>
    <property type="match status" value="1"/>
</dbReference>
<dbReference type="PROSITE" id="PS00866">
    <property type="entry name" value="CPSASE_1"/>
    <property type="match status" value="1"/>
</dbReference>
<dbReference type="PROSITE" id="PS00867">
    <property type="entry name" value="CPSASE_2"/>
    <property type="match status" value="1"/>
</dbReference>
<dbReference type="PROSITE" id="PS50991">
    <property type="entry name" value="PYR_CT"/>
    <property type="match status" value="1"/>
</dbReference>
<keyword id="KW-0067">ATP-binding</keyword>
<keyword id="KW-0092">Biotin</keyword>
<keyword id="KW-0963">Cytoplasm</keyword>
<keyword id="KW-0312">Gluconeogenesis</keyword>
<keyword id="KW-0436">Ligase</keyword>
<keyword id="KW-0479">Metal-binding</keyword>
<keyword id="KW-0511">Multifunctional enzyme</keyword>
<keyword id="KW-0547">Nucleotide-binding</keyword>
<keyword id="KW-0862">Zinc</keyword>
<name>PYC_PICAN</name>